<comment type="function">
    <text evidence="7">Lytic polysaccharide monooxygenase (LPMO) that depolymerizes crystalline and amorphous polysaccharides via the oxidation of scissile alpha- or beta-(1-4)-glycosidic bonds, yielding C1 and C4 oxidation products (PubMed:28919928). Catalysis by LPMOs requires the reduction of the active-site copper from Cu(II) to Cu(I) by a reducing agent and H(2)O(2) or O(2) as a cosubstrate (PubMed:28919928). Active on cellulose and on xyloglucan for deconstruction of plant biomass (PubMed:28919928).</text>
</comment>
<comment type="catalytic activity">
    <reaction evidence="7">
        <text>[(1-&gt;4)-beta-D-glucosyl]n+m + reduced acceptor + O2 = 4-dehydro-beta-D-glucosyl-[(1-&gt;4)-beta-D-glucosyl]n-1 + [(1-&gt;4)-beta-D-glucosyl]m + acceptor + H2O.</text>
        <dbReference type="EC" id="1.14.99.56"/>
    </reaction>
</comment>
<comment type="cofactor">
    <cofactor evidence="2">
        <name>Cu(2+)</name>
        <dbReference type="ChEBI" id="CHEBI:29036"/>
    </cofactor>
    <text evidence="2">Binds 1 copper ion per subunit.</text>
</comment>
<comment type="subcellular location">
    <subcellularLocation>
        <location evidence="7">Secreted</location>
    </subcellularLocation>
</comment>
<comment type="biotechnology">
    <text evidence="1">Lignocellulose is the most abundant polymeric composite on Earth and is a recalcitrant but promising renewable substrate for industrial biotechnology applications. Together with cellobiose dehydrogenases (CDHs) an enzymatic system capable of oxidative cellulose cleavage is formed, which increases the efficiency of cellulases and put LPMOs at focus of biofuel research.</text>
</comment>
<comment type="similarity">
    <text evidence="9">Belongs to the polysaccharide monooxygenase AA9 family.</text>
</comment>
<feature type="signal peptide" evidence="4">
    <location>
        <begin position="1"/>
        <end position="22"/>
    </location>
</feature>
<feature type="chain" id="PRO_5005325989" description="AA9 family lytic polysaccharide monooxygenase A">
    <location>
        <begin position="23"/>
        <end position="288"/>
    </location>
</feature>
<feature type="region of interest" description="Disordered" evidence="6">
    <location>
        <begin position="236"/>
        <end position="270"/>
    </location>
</feature>
<feature type="compositionally biased region" description="Low complexity" evidence="6">
    <location>
        <begin position="249"/>
        <end position="270"/>
    </location>
</feature>
<feature type="binding site" evidence="3">
    <location>
        <position position="21"/>
    </location>
    <ligand>
        <name>Cu(2+)</name>
        <dbReference type="ChEBI" id="CHEBI:29036"/>
        <note>catalytic</note>
    </ligand>
</feature>
<feature type="binding site" evidence="3">
    <location>
        <position position="104"/>
    </location>
    <ligand>
        <name>Cu(2+)</name>
        <dbReference type="ChEBI" id="CHEBI:29036"/>
        <note>catalytic</note>
    </ligand>
</feature>
<feature type="binding site" evidence="2">
    <location>
        <position position="177"/>
    </location>
    <ligand>
        <name>O2</name>
        <dbReference type="ChEBI" id="CHEBI:15379"/>
    </ligand>
</feature>
<feature type="binding site" evidence="2">
    <location>
        <position position="186"/>
    </location>
    <ligand>
        <name>O2</name>
        <dbReference type="ChEBI" id="CHEBI:15379"/>
    </ligand>
</feature>
<feature type="binding site" evidence="3">
    <location>
        <position position="188"/>
    </location>
    <ligand>
        <name>Cu(2+)</name>
        <dbReference type="ChEBI" id="CHEBI:29036"/>
        <note>catalytic</note>
    </ligand>
</feature>
<feature type="glycosylation site" description="N-linked (GlcNAc...) asparagine" evidence="5">
    <location>
        <position position="151"/>
    </location>
</feature>
<feature type="disulfide bond" evidence="1">
    <location>
        <begin position="74"/>
        <end position="191"/>
    </location>
</feature>
<feature type="disulfide bond" evidence="1">
    <location>
        <begin position="115"/>
        <end position="119"/>
    </location>
</feature>
<accession>A0A0J9XKT0</accession>
<reference key="1">
    <citation type="submission" date="2014-03" db="EMBL/GenBank/DDBJ databases">
        <authorList>
            <person name="Casaregola S."/>
        </authorList>
    </citation>
    <scope>NUCLEOTIDE SEQUENCE [LARGE SCALE GENOMIC DNA]</scope>
    <source>
        <strain>CLIB 918</strain>
    </source>
</reference>
<reference key="2">
    <citation type="journal article" date="2017" name="Biotechnol. Biofuels">
        <title>The yeast Geotrichum candidum encodes functional lytic polysaccharide monooxygenases.</title>
        <authorList>
            <person name="Ladeveze S."/>
            <person name="Haon M."/>
            <person name="Villares A."/>
            <person name="Cathala B."/>
            <person name="Grisel S."/>
            <person name="Herpoel-Gimbert I."/>
            <person name="Henrissat B."/>
            <person name="Berrin J.G."/>
        </authorList>
    </citation>
    <scope>FUNCTION</scope>
    <scope>CATALYTIC ACTIVITY</scope>
    <scope>SUBCELLULAR LOCATION</scope>
</reference>
<gene>
    <name evidence="8" type="primary">LPMO9A</name>
    <name type="ORF">BN980_GECA32s02892g</name>
</gene>
<keyword id="KW-0119">Carbohydrate metabolism</keyword>
<keyword id="KW-0136">Cellulose degradation</keyword>
<keyword id="KW-0186">Copper</keyword>
<keyword id="KW-1015">Disulfide bond</keyword>
<keyword id="KW-0325">Glycoprotein</keyword>
<keyword id="KW-0479">Metal-binding</keyword>
<keyword id="KW-0503">Monooxygenase</keyword>
<keyword id="KW-0560">Oxidoreductase</keyword>
<keyword id="KW-0624">Polysaccharide degradation</keyword>
<keyword id="KW-0964">Secreted</keyword>
<keyword id="KW-0732">Signal</keyword>
<organism>
    <name type="scientific">Geotrichum candidum</name>
    <name type="common">Oospora lactis</name>
    <name type="synonym">Dipodascus geotrichum</name>
    <dbReference type="NCBI Taxonomy" id="1173061"/>
    <lineage>
        <taxon>Eukaryota</taxon>
        <taxon>Fungi</taxon>
        <taxon>Dikarya</taxon>
        <taxon>Ascomycota</taxon>
        <taxon>Saccharomycotina</taxon>
        <taxon>Dipodascomycetes</taxon>
        <taxon>Dipodascales</taxon>
        <taxon>Dipodascaceae</taxon>
        <taxon>Geotrichum</taxon>
    </lineage>
</organism>
<evidence type="ECO:0000250" key="1">
    <source>
        <dbReference type="UniProtKB" id="A0A5J6BJN2"/>
    </source>
</evidence>
<evidence type="ECO:0000250" key="2">
    <source>
        <dbReference type="UniProtKB" id="Q1K8B6"/>
    </source>
</evidence>
<evidence type="ECO:0000250" key="3">
    <source>
        <dbReference type="UniProtKB" id="Q7Z9M7"/>
    </source>
</evidence>
<evidence type="ECO:0000255" key="4"/>
<evidence type="ECO:0000255" key="5">
    <source>
        <dbReference type="PROSITE-ProRule" id="PRU00498"/>
    </source>
</evidence>
<evidence type="ECO:0000256" key="6">
    <source>
        <dbReference type="SAM" id="MobiDB-lite"/>
    </source>
</evidence>
<evidence type="ECO:0000269" key="7">
    <source>
    </source>
</evidence>
<evidence type="ECO:0000303" key="8">
    <source>
    </source>
</evidence>
<evidence type="ECO:0000305" key="9"/>
<protein>
    <recommendedName>
        <fullName evidence="8">AA9 family lytic polysaccharide monooxygenase A</fullName>
        <shortName evidence="8">LPMO9A</shortName>
        <ecNumber evidence="7">1.14.99.56</ecNumber>
    </recommendedName>
    <alternativeName>
        <fullName evidence="9">Cellulase LPMO9A</fullName>
    </alternativeName>
    <alternativeName>
        <fullName evidence="9">Endo-beta-1,4-glucanase LPMO9A</fullName>
        <shortName evidence="9">Endoglucanase LPMO9A</shortName>
    </alternativeName>
    <alternativeName>
        <fullName evidence="9">Glycosyl hydrolase 61 family protein LPMO9A</fullName>
    </alternativeName>
</protein>
<name>LP9A_GEOCN</name>
<dbReference type="EC" id="1.14.99.56" evidence="7"/>
<dbReference type="EMBL" id="CCBN010000028">
    <property type="protein sequence ID" value="CDO58049.1"/>
    <property type="molecule type" value="Genomic_DNA"/>
</dbReference>
<dbReference type="STRING" id="1173061.A0A0J9XKT0"/>
<dbReference type="OrthoDB" id="4090429at2759"/>
<dbReference type="Proteomes" id="UP000242525">
    <property type="component" value="Unassembled WGS sequence"/>
</dbReference>
<dbReference type="GO" id="GO:0005576">
    <property type="term" value="C:extracellular region"/>
    <property type="evidence" value="ECO:0007669"/>
    <property type="project" value="UniProtKB-SubCell"/>
</dbReference>
<dbReference type="GO" id="GO:0046872">
    <property type="term" value="F:metal ion binding"/>
    <property type="evidence" value="ECO:0007669"/>
    <property type="project" value="UniProtKB-KW"/>
</dbReference>
<dbReference type="GO" id="GO:0004497">
    <property type="term" value="F:monooxygenase activity"/>
    <property type="evidence" value="ECO:0007669"/>
    <property type="project" value="UniProtKB-KW"/>
</dbReference>
<dbReference type="GO" id="GO:0030245">
    <property type="term" value="P:cellulose catabolic process"/>
    <property type="evidence" value="ECO:0007669"/>
    <property type="project" value="UniProtKB-KW"/>
</dbReference>
<dbReference type="CDD" id="cd21175">
    <property type="entry name" value="LPMO_AA9"/>
    <property type="match status" value="1"/>
</dbReference>
<dbReference type="Gene3D" id="2.70.50.70">
    <property type="match status" value="1"/>
</dbReference>
<dbReference type="InterPro" id="IPR049892">
    <property type="entry name" value="AA9"/>
</dbReference>
<dbReference type="InterPro" id="IPR005103">
    <property type="entry name" value="AA9_LPMO"/>
</dbReference>
<dbReference type="PANTHER" id="PTHR33353:SF6">
    <property type="entry name" value="ENDOGLUCANASE IV"/>
    <property type="match status" value="1"/>
</dbReference>
<dbReference type="PANTHER" id="PTHR33353">
    <property type="entry name" value="PUTATIVE (AFU_ORTHOLOGUE AFUA_1G12560)-RELATED"/>
    <property type="match status" value="1"/>
</dbReference>
<dbReference type="Pfam" id="PF03443">
    <property type="entry name" value="AA9"/>
    <property type="match status" value="1"/>
</dbReference>
<proteinExistence type="evidence at protein level"/>
<sequence length="288" mass="30048">MKSTSATKFSVLAAATFAAAHGIVSDIKFDNDWYTSSLVYQDPYANPVPERITWSFFGSGNGPVADFTTKDIVCNGNAKAAALVADVKAGATATFYWTVWPESHRGPVMTYLANCGGDCRTVDPSSLSYFKIDHAGYENGEWISDKIIANNNSYSLTIPEDIAPGNYLIRHELLALHSAYDELGAQFYPMCANLKISGSGTANPPGVKFPGAYKKDDAGILVNIYNGLTSYQIPGPEPYKSGSGSSDNAAEAVSSAAAEEPAAAATSAAAEEPAAAATSAAAATSAAX</sequence>